<name>MRAY_STRPJ</name>
<reference key="1">
    <citation type="journal article" date="2009" name="J. Bacteriol.">
        <title>Role of conjugative elements in the evolution of the multidrug-resistant pandemic clone Streptococcus pneumoniae Spain23F ST81.</title>
        <authorList>
            <person name="Croucher N.J."/>
            <person name="Walker D."/>
            <person name="Romero P."/>
            <person name="Lennard N."/>
            <person name="Paterson G.K."/>
            <person name="Bason N.C."/>
            <person name="Mitchell A.M."/>
            <person name="Quail M.A."/>
            <person name="Andrew P.W."/>
            <person name="Parkhill J."/>
            <person name="Bentley S.D."/>
            <person name="Mitchell T.J."/>
        </authorList>
    </citation>
    <scope>NUCLEOTIDE SEQUENCE [LARGE SCALE GENOMIC DNA]</scope>
    <source>
        <strain>ATCC 700669 / Spain 23F-1</strain>
    </source>
</reference>
<comment type="function">
    <text evidence="1">Catalyzes the initial step of the lipid cycle reactions in the biosynthesis of the cell wall peptidoglycan: transfers peptidoglycan precursor phospho-MurNAc-pentapeptide from UDP-MurNAc-pentapeptide onto the lipid carrier undecaprenyl phosphate, yielding undecaprenyl-pyrophosphoryl-MurNAc-pentapeptide, known as lipid I.</text>
</comment>
<comment type="catalytic activity">
    <reaction evidence="1">
        <text>UDP-N-acetyl-alpha-D-muramoyl-L-alanyl-gamma-D-glutamyl-L-lysyl-D-alanyl-D-alanine + di-trans,octa-cis-undecaprenyl phosphate = Mur2Ac(oyl-L-Ala-gamma-D-Glu-L-Lys-D-Ala-D-Ala)-di-trans,octa-cis-undecaprenyl diphosphate + UMP</text>
        <dbReference type="Rhea" id="RHEA:21920"/>
        <dbReference type="ChEBI" id="CHEBI:57865"/>
        <dbReference type="ChEBI" id="CHEBI:60032"/>
        <dbReference type="ChEBI" id="CHEBI:60392"/>
        <dbReference type="ChEBI" id="CHEBI:70758"/>
        <dbReference type="EC" id="2.7.8.13"/>
    </reaction>
</comment>
<comment type="cofactor">
    <cofactor evidence="1">
        <name>Mg(2+)</name>
        <dbReference type="ChEBI" id="CHEBI:18420"/>
    </cofactor>
</comment>
<comment type="pathway">
    <text evidence="1">Cell wall biogenesis; peptidoglycan biosynthesis.</text>
</comment>
<comment type="subcellular location">
    <subcellularLocation>
        <location evidence="1">Cell membrane</location>
        <topology evidence="1">Multi-pass membrane protein</topology>
    </subcellularLocation>
</comment>
<comment type="similarity">
    <text evidence="1">Belongs to the glycosyltransferase 4 family. MraY subfamily.</text>
</comment>
<dbReference type="EC" id="2.7.8.13" evidence="1"/>
<dbReference type="EMBL" id="FM211187">
    <property type="protein sequence ID" value="CAR68167.1"/>
    <property type="molecule type" value="Genomic_DNA"/>
</dbReference>
<dbReference type="RefSeq" id="WP_000470846.1">
    <property type="nucleotide sequence ID" value="NC_011900.1"/>
</dbReference>
<dbReference type="SMR" id="B8ZL54"/>
<dbReference type="KEGG" id="sne:SPN23F03090"/>
<dbReference type="HOGENOM" id="CLU_023982_0_1_9"/>
<dbReference type="UniPathway" id="UPA00219"/>
<dbReference type="GO" id="GO:0005886">
    <property type="term" value="C:plasma membrane"/>
    <property type="evidence" value="ECO:0007669"/>
    <property type="project" value="UniProtKB-SubCell"/>
</dbReference>
<dbReference type="GO" id="GO:0046872">
    <property type="term" value="F:metal ion binding"/>
    <property type="evidence" value="ECO:0007669"/>
    <property type="project" value="UniProtKB-KW"/>
</dbReference>
<dbReference type="GO" id="GO:0008963">
    <property type="term" value="F:phospho-N-acetylmuramoyl-pentapeptide-transferase activity"/>
    <property type="evidence" value="ECO:0007669"/>
    <property type="project" value="UniProtKB-UniRule"/>
</dbReference>
<dbReference type="GO" id="GO:0051301">
    <property type="term" value="P:cell division"/>
    <property type="evidence" value="ECO:0007669"/>
    <property type="project" value="UniProtKB-KW"/>
</dbReference>
<dbReference type="GO" id="GO:0071555">
    <property type="term" value="P:cell wall organization"/>
    <property type="evidence" value="ECO:0007669"/>
    <property type="project" value="UniProtKB-KW"/>
</dbReference>
<dbReference type="GO" id="GO:0009252">
    <property type="term" value="P:peptidoglycan biosynthetic process"/>
    <property type="evidence" value="ECO:0007669"/>
    <property type="project" value="UniProtKB-UniRule"/>
</dbReference>
<dbReference type="GO" id="GO:0008360">
    <property type="term" value="P:regulation of cell shape"/>
    <property type="evidence" value="ECO:0007669"/>
    <property type="project" value="UniProtKB-KW"/>
</dbReference>
<dbReference type="CDD" id="cd06852">
    <property type="entry name" value="GT_MraY"/>
    <property type="match status" value="1"/>
</dbReference>
<dbReference type="HAMAP" id="MF_00038">
    <property type="entry name" value="MraY"/>
    <property type="match status" value="1"/>
</dbReference>
<dbReference type="InterPro" id="IPR000715">
    <property type="entry name" value="Glycosyl_transferase_4"/>
</dbReference>
<dbReference type="InterPro" id="IPR003524">
    <property type="entry name" value="PNAcMuramoyl-5peptid_Trfase"/>
</dbReference>
<dbReference type="InterPro" id="IPR018480">
    <property type="entry name" value="PNAcMuramoyl-5peptid_Trfase_CS"/>
</dbReference>
<dbReference type="NCBIfam" id="TIGR00445">
    <property type="entry name" value="mraY"/>
    <property type="match status" value="1"/>
</dbReference>
<dbReference type="PANTHER" id="PTHR22926">
    <property type="entry name" value="PHOSPHO-N-ACETYLMURAMOYL-PENTAPEPTIDE-TRANSFERASE"/>
    <property type="match status" value="1"/>
</dbReference>
<dbReference type="PANTHER" id="PTHR22926:SF5">
    <property type="entry name" value="PHOSPHO-N-ACETYLMURAMOYL-PENTAPEPTIDE-TRANSFERASE HOMOLOG"/>
    <property type="match status" value="1"/>
</dbReference>
<dbReference type="Pfam" id="PF00953">
    <property type="entry name" value="Glycos_transf_4"/>
    <property type="match status" value="1"/>
</dbReference>
<dbReference type="Pfam" id="PF10555">
    <property type="entry name" value="MraY_sig1"/>
    <property type="match status" value="1"/>
</dbReference>
<dbReference type="PROSITE" id="PS01347">
    <property type="entry name" value="MRAY_1"/>
    <property type="match status" value="1"/>
</dbReference>
<dbReference type="PROSITE" id="PS01348">
    <property type="entry name" value="MRAY_2"/>
    <property type="match status" value="1"/>
</dbReference>
<evidence type="ECO:0000255" key="1">
    <source>
        <dbReference type="HAMAP-Rule" id="MF_00038"/>
    </source>
</evidence>
<gene>
    <name evidence="1" type="primary">mraY</name>
    <name type="ordered locus">SPN23F03090</name>
</gene>
<protein>
    <recommendedName>
        <fullName evidence="1">Phospho-N-acetylmuramoyl-pentapeptide-transferase</fullName>
        <ecNumber evidence="1">2.7.8.13</ecNumber>
    </recommendedName>
    <alternativeName>
        <fullName evidence="1">UDP-MurNAc-pentapeptide phosphotransferase</fullName>
    </alternativeName>
</protein>
<sequence>MFISISAGVVTFLITLVGIPAFIQFYRKAQITGQQMHEDVKQHQAKAGTPTMGGLVFLIAAVVVSFLLALFSKQLTNNVGMILFILVLYGLVGFLDDFLKVFRKINEGLNPKQKLALQLLGGVIFYLFYERGGDMLSVFSYQVHLGIFYIIFALFWLVGFSNAVNLTDGIDGLASISVVISLSAYGVIAYVQGQMDILLVILAMIGGLLGFFVFNHKPAKVFMGDVGSLALGGMLAAISMALHQEWTLLIIGIVYVFETTSVMMQVSYFKLTGGKRIFRMTPVHHHFELGGLSGKGNPWSEWKVDFFFWGVGLLASLLTLAILYLM</sequence>
<organism>
    <name type="scientific">Streptococcus pneumoniae (strain ATCC 700669 / Spain 23F-1)</name>
    <dbReference type="NCBI Taxonomy" id="561276"/>
    <lineage>
        <taxon>Bacteria</taxon>
        <taxon>Bacillati</taxon>
        <taxon>Bacillota</taxon>
        <taxon>Bacilli</taxon>
        <taxon>Lactobacillales</taxon>
        <taxon>Streptococcaceae</taxon>
        <taxon>Streptococcus</taxon>
    </lineage>
</organism>
<keyword id="KW-0131">Cell cycle</keyword>
<keyword id="KW-0132">Cell division</keyword>
<keyword id="KW-1003">Cell membrane</keyword>
<keyword id="KW-0133">Cell shape</keyword>
<keyword id="KW-0961">Cell wall biogenesis/degradation</keyword>
<keyword id="KW-0460">Magnesium</keyword>
<keyword id="KW-0472">Membrane</keyword>
<keyword id="KW-0479">Metal-binding</keyword>
<keyword id="KW-0573">Peptidoglycan synthesis</keyword>
<keyword id="KW-0808">Transferase</keyword>
<keyword id="KW-0812">Transmembrane</keyword>
<keyword id="KW-1133">Transmembrane helix</keyword>
<proteinExistence type="inferred from homology"/>
<feature type="chain" id="PRO_1000117199" description="Phospho-N-acetylmuramoyl-pentapeptide-transferase">
    <location>
        <begin position="1"/>
        <end position="326"/>
    </location>
</feature>
<feature type="transmembrane region" description="Helical" evidence="1">
    <location>
        <begin position="3"/>
        <end position="23"/>
    </location>
</feature>
<feature type="transmembrane region" description="Helical" evidence="1">
    <location>
        <begin position="51"/>
        <end position="71"/>
    </location>
</feature>
<feature type="transmembrane region" description="Helical" evidence="1">
    <location>
        <begin position="79"/>
        <end position="99"/>
    </location>
</feature>
<feature type="transmembrane region" description="Helical" evidence="1">
    <location>
        <begin position="115"/>
        <end position="135"/>
    </location>
</feature>
<feature type="transmembrane region" description="Helical" evidence="1">
    <location>
        <begin position="138"/>
        <end position="158"/>
    </location>
</feature>
<feature type="transmembrane region" description="Helical" evidence="1">
    <location>
        <begin position="169"/>
        <end position="189"/>
    </location>
</feature>
<feature type="transmembrane region" description="Helical" evidence="1">
    <location>
        <begin position="195"/>
        <end position="215"/>
    </location>
</feature>
<feature type="transmembrane region" description="Helical" evidence="1">
    <location>
        <begin position="221"/>
        <end position="243"/>
    </location>
</feature>
<feature type="transmembrane region" description="Helical" evidence="1">
    <location>
        <begin position="306"/>
        <end position="326"/>
    </location>
</feature>
<accession>B8ZL54</accession>